<dbReference type="EC" id="5.3.1.6" evidence="1"/>
<dbReference type="EMBL" id="BX936398">
    <property type="protein sequence ID" value="CAH20564.1"/>
    <property type="molecule type" value="Genomic_DNA"/>
</dbReference>
<dbReference type="SMR" id="Q66CS8"/>
<dbReference type="KEGG" id="ypo:BZ17_1197"/>
<dbReference type="KEGG" id="yps:YPTB1324"/>
<dbReference type="PATRIC" id="fig|273123.14.peg.1278"/>
<dbReference type="UniPathway" id="UPA00115">
    <property type="reaction ID" value="UER00412"/>
</dbReference>
<dbReference type="Proteomes" id="UP000001011">
    <property type="component" value="Chromosome"/>
</dbReference>
<dbReference type="GO" id="GO:0005829">
    <property type="term" value="C:cytosol"/>
    <property type="evidence" value="ECO:0007669"/>
    <property type="project" value="TreeGrafter"/>
</dbReference>
<dbReference type="GO" id="GO:0004751">
    <property type="term" value="F:ribose-5-phosphate isomerase activity"/>
    <property type="evidence" value="ECO:0007669"/>
    <property type="project" value="UniProtKB-UniRule"/>
</dbReference>
<dbReference type="GO" id="GO:0006014">
    <property type="term" value="P:D-ribose metabolic process"/>
    <property type="evidence" value="ECO:0007669"/>
    <property type="project" value="TreeGrafter"/>
</dbReference>
<dbReference type="GO" id="GO:0009052">
    <property type="term" value="P:pentose-phosphate shunt, non-oxidative branch"/>
    <property type="evidence" value="ECO:0007669"/>
    <property type="project" value="UniProtKB-UniRule"/>
</dbReference>
<dbReference type="CDD" id="cd01398">
    <property type="entry name" value="RPI_A"/>
    <property type="match status" value="1"/>
</dbReference>
<dbReference type="FunFam" id="3.40.50.1360:FF:000001">
    <property type="entry name" value="Ribose-5-phosphate isomerase A"/>
    <property type="match status" value="1"/>
</dbReference>
<dbReference type="Gene3D" id="3.30.70.260">
    <property type="match status" value="1"/>
</dbReference>
<dbReference type="Gene3D" id="3.40.50.1360">
    <property type="match status" value="1"/>
</dbReference>
<dbReference type="HAMAP" id="MF_00170">
    <property type="entry name" value="Rib_5P_isom_A"/>
    <property type="match status" value="1"/>
</dbReference>
<dbReference type="InterPro" id="IPR037171">
    <property type="entry name" value="NagB/RpiA_transferase-like"/>
</dbReference>
<dbReference type="InterPro" id="IPR020672">
    <property type="entry name" value="Ribose5P_isomerase_typA_subgr"/>
</dbReference>
<dbReference type="InterPro" id="IPR004788">
    <property type="entry name" value="Ribose5P_isomerase_type_A"/>
</dbReference>
<dbReference type="NCBIfam" id="NF001924">
    <property type="entry name" value="PRK00702.1"/>
    <property type="match status" value="1"/>
</dbReference>
<dbReference type="NCBIfam" id="TIGR00021">
    <property type="entry name" value="rpiA"/>
    <property type="match status" value="1"/>
</dbReference>
<dbReference type="PANTHER" id="PTHR11934">
    <property type="entry name" value="RIBOSE-5-PHOSPHATE ISOMERASE"/>
    <property type="match status" value="1"/>
</dbReference>
<dbReference type="PANTHER" id="PTHR11934:SF0">
    <property type="entry name" value="RIBOSE-5-PHOSPHATE ISOMERASE"/>
    <property type="match status" value="1"/>
</dbReference>
<dbReference type="Pfam" id="PF06026">
    <property type="entry name" value="Rib_5-P_isom_A"/>
    <property type="match status" value="1"/>
</dbReference>
<dbReference type="SUPFAM" id="SSF75445">
    <property type="entry name" value="D-ribose-5-phosphate isomerase (RpiA), lid domain"/>
    <property type="match status" value="1"/>
</dbReference>
<dbReference type="SUPFAM" id="SSF100950">
    <property type="entry name" value="NagB/RpiA/CoA transferase-like"/>
    <property type="match status" value="1"/>
</dbReference>
<sequence>MSNQQNDAKRAAARRVIQDFVFDGMTLGLGSGTTSHFFVRELGQHVAKGLQLTCTTTSRATSEVARDVGIELSDPNEMNEIDLTIDGPDEIDRRFNMIKGGGACLLWEKIIAHASKRMICICDETKIVNCLGQFPLPVEIVPFAWKQTERRVERVLAEQGLHHVPIIRRMGGGHPVITDSGNFILDCHCGAIITAPEPLEIELNRIPGVVENGLFTREATGMVVGYFDGSSYVQLR</sequence>
<comment type="function">
    <text evidence="1">Catalyzes the reversible conversion of ribose-5-phosphate to ribulose 5-phosphate.</text>
</comment>
<comment type="catalytic activity">
    <reaction evidence="1">
        <text>aldehydo-D-ribose 5-phosphate = D-ribulose 5-phosphate</text>
        <dbReference type="Rhea" id="RHEA:14657"/>
        <dbReference type="ChEBI" id="CHEBI:58121"/>
        <dbReference type="ChEBI" id="CHEBI:58273"/>
        <dbReference type="EC" id="5.3.1.6"/>
    </reaction>
</comment>
<comment type="pathway">
    <text evidence="1">Carbohydrate degradation; pentose phosphate pathway; D-ribose 5-phosphate from D-ribulose 5-phosphate (non-oxidative stage): step 1/1.</text>
</comment>
<comment type="subunit">
    <text evidence="1">Homodimer.</text>
</comment>
<comment type="similarity">
    <text evidence="1">Belongs to the ribose 5-phosphate isomerase family.</text>
</comment>
<organism>
    <name type="scientific">Yersinia pseudotuberculosis serotype I (strain IP32953)</name>
    <dbReference type="NCBI Taxonomy" id="273123"/>
    <lineage>
        <taxon>Bacteria</taxon>
        <taxon>Pseudomonadati</taxon>
        <taxon>Pseudomonadota</taxon>
        <taxon>Gammaproteobacteria</taxon>
        <taxon>Enterobacterales</taxon>
        <taxon>Yersiniaceae</taxon>
        <taxon>Yersinia</taxon>
    </lineage>
</organism>
<keyword id="KW-0413">Isomerase</keyword>
<reference key="1">
    <citation type="journal article" date="2004" name="Proc. Natl. Acad. Sci. U.S.A.">
        <title>Insights into the evolution of Yersinia pestis through whole-genome comparison with Yersinia pseudotuberculosis.</title>
        <authorList>
            <person name="Chain P.S.G."/>
            <person name="Carniel E."/>
            <person name="Larimer F.W."/>
            <person name="Lamerdin J."/>
            <person name="Stoutland P.O."/>
            <person name="Regala W.M."/>
            <person name="Georgescu A.M."/>
            <person name="Vergez L.M."/>
            <person name="Land M.L."/>
            <person name="Motin V.L."/>
            <person name="Brubaker R.R."/>
            <person name="Fowler J."/>
            <person name="Hinnebusch J."/>
            <person name="Marceau M."/>
            <person name="Medigue C."/>
            <person name="Simonet M."/>
            <person name="Chenal-Francisque V."/>
            <person name="Souza B."/>
            <person name="Dacheux D."/>
            <person name="Elliott J.M."/>
            <person name="Derbise A."/>
            <person name="Hauser L.J."/>
            <person name="Garcia E."/>
        </authorList>
    </citation>
    <scope>NUCLEOTIDE SEQUENCE [LARGE SCALE GENOMIC DNA]</scope>
    <source>
        <strain>IP32953</strain>
    </source>
</reference>
<accession>Q66CS8</accession>
<feature type="chain" id="PRO_0000158504" description="Ribose-5-phosphate isomerase A 2">
    <location>
        <begin position="1"/>
        <end position="236"/>
    </location>
</feature>
<feature type="active site" description="Proton acceptor" evidence="1">
    <location>
        <position position="108"/>
    </location>
</feature>
<feature type="binding site" evidence="1">
    <location>
        <begin position="31"/>
        <end position="34"/>
    </location>
    <ligand>
        <name>substrate</name>
    </ligand>
</feature>
<feature type="binding site" evidence="1">
    <location>
        <begin position="86"/>
        <end position="89"/>
    </location>
    <ligand>
        <name>substrate</name>
    </ligand>
</feature>
<feature type="binding site" evidence="1">
    <location>
        <begin position="99"/>
        <end position="102"/>
    </location>
    <ligand>
        <name>substrate</name>
    </ligand>
</feature>
<feature type="binding site" evidence="1">
    <location>
        <position position="126"/>
    </location>
    <ligand>
        <name>substrate</name>
    </ligand>
</feature>
<gene>
    <name evidence="1" type="primary">rpiA2</name>
    <name type="ordered locus">YPTB1324</name>
</gene>
<proteinExistence type="inferred from homology"/>
<evidence type="ECO:0000255" key="1">
    <source>
        <dbReference type="HAMAP-Rule" id="MF_00170"/>
    </source>
</evidence>
<protein>
    <recommendedName>
        <fullName evidence="1">Ribose-5-phosphate isomerase A 2</fullName>
        <ecNumber evidence="1">5.3.1.6</ecNumber>
    </recommendedName>
    <alternativeName>
        <fullName evidence="1">Phosphoriboisomerase A 2</fullName>
        <shortName evidence="1">PRI 2</shortName>
    </alternativeName>
</protein>
<name>RPIA2_YERPS</name>